<comment type="catalytic activity">
    <reaction evidence="1">
        <text>5-amino-1-(5-phospho-D-ribosyl)imidazole-4-carboxylate + L-aspartate + ATP = (2S)-2-[5-amino-1-(5-phospho-beta-D-ribosyl)imidazole-4-carboxamido]succinate + ADP + phosphate + 2 H(+)</text>
        <dbReference type="Rhea" id="RHEA:22628"/>
        <dbReference type="ChEBI" id="CHEBI:15378"/>
        <dbReference type="ChEBI" id="CHEBI:29991"/>
        <dbReference type="ChEBI" id="CHEBI:30616"/>
        <dbReference type="ChEBI" id="CHEBI:43474"/>
        <dbReference type="ChEBI" id="CHEBI:58443"/>
        <dbReference type="ChEBI" id="CHEBI:77657"/>
        <dbReference type="ChEBI" id="CHEBI:456216"/>
        <dbReference type="EC" id="6.3.2.6"/>
    </reaction>
</comment>
<comment type="pathway">
    <text evidence="1">Purine metabolism; IMP biosynthesis via de novo pathway; 5-amino-1-(5-phospho-D-ribosyl)imidazole-4-carboxamide from 5-amino-1-(5-phospho-D-ribosyl)imidazole-4-carboxylate: step 1/2.</text>
</comment>
<comment type="similarity">
    <text evidence="1">Belongs to the SAICAR synthetase family.</text>
</comment>
<accession>A2C740</accession>
<proteinExistence type="inferred from homology"/>
<name>PUR7_PROM3</name>
<feature type="chain" id="PRO_1000018752" description="Phosphoribosylaminoimidazole-succinocarboxamide synthase">
    <location>
        <begin position="1"/>
        <end position="242"/>
    </location>
</feature>
<sequence length="242" mass="26995">MTPDHGPLLYEGKAKRVFAADQPDCVLVEFKNDATAFNALKRAELEGKGRLNCQISARLFEMLEREGVPTHYLGLAAETWMLVQHVDVIPLEVVIRNVATGSLCQQTPIAAGTELSPALLDLYYKDDNLGDPLLSESRLQLLGLISSQQRLEIEQLARRVNQLLLSFFESLDLLLVDFKLELGLNGAGTLLVADEISPDTCRLWDHRNSDPQARILDKDRFRQDLGGVIEAYGEILKRVQGV</sequence>
<reference key="1">
    <citation type="journal article" date="2007" name="PLoS Genet.">
        <title>Patterns and implications of gene gain and loss in the evolution of Prochlorococcus.</title>
        <authorList>
            <person name="Kettler G.C."/>
            <person name="Martiny A.C."/>
            <person name="Huang K."/>
            <person name="Zucker J."/>
            <person name="Coleman M.L."/>
            <person name="Rodrigue S."/>
            <person name="Chen F."/>
            <person name="Lapidus A."/>
            <person name="Ferriera S."/>
            <person name="Johnson J."/>
            <person name="Steglich C."/>
            <person name="Church G.M."/>
            <person name="Richardson P."/>
            <person name="Chisholm S.W."/>
        </authorList>
    </citation>
    <scope>NUCLEOTIDE SEQUENCE [LARGE SCALE GENOMIC DNA]</scope>
    <source>
        <strain>MIT 9303</strain>
    </source>
</reference>
<evidence type="ECO:0000255" key="1">
    <source>
        <dbReference type="HAMAP-Rule" id="MF_00137"/>
    </source>
</evidence>
<dbReference type="EC" id="6.3.2.6" evidence="1"/>
<dbReference type="EMBL" id="CP000554">
    <property type="protein sequence ID" value="ABM77300.1"/>
    <property type="molecule type" value="Genomic_DNA"/>
</dbReference>
<dbReference type="RefSeq" id="WP_011825222.1">
    <property type="nucleotide sequence ID" value="NC_008820.1"/>
</dbReference>
<dbReference type="SMR" id="A2C740"/>
<dbReference type="STRING" id="59922.P9303_05481"/>
<dbReference type="KEGG" id="pmf:P9303_05481"/>
<dbReference type="HOGENOM" id="CLU_061495_2_0_3"/>
<dbReference type="BioCyc" id="PMAR59922:G1G80-504-MONOMER"/>
<dbReference type="UniPathway" id="UPA00074">
    <property type="reaction ID" value="UER00131"/>
</dbReference>
<dbReference type="Proteomes" id="UP000002274">
    <property type="component" value="Chromosome"/>
</dbReference>
<dbReference type="GO" id="GO:0005524">
    <property type="term" value="F:ATP binding"/>
    <property type="evidence" value="ECO:0007669"/>
    <property type="project" value="UniProtKB-KW"/>
</dbReference>
<dbReference type="GO" id="GO:0004639">
    <property type="term" value="F:phosphoribosylaminoimidazolesuccinocarboxamide synthase activity"/>
    <property type="evidence" value="ECO:0007669"/>
    <property type="project" value="UniProtKB-UniRule"/>
</dbReference>
<dbReference type="GO" id="GO:0006189">
    <property type="term" value="P:'de novo' IMP biosynthetic process"/>
    <property type="evidence" value="ECO:0007669"/>
    <property type="project" value="UniProtKB-UniRule"/>
</dbReference>
<dbReference type="GO" id="GO:0009236">
    <property type="term" value="P:cobalamin biosynthetic process"/>
    <property type="evidence" value="ECO:0007669"/>
    <property type="project" value="InterPro"/>
</dbReference>
<dbReference type="CDD" id="cd01415">
    <property type="entry name" value="SAICAR_synt_PurC"/>
    <property type="match status" value="1"/>
</dbReference>
<dbReference type="Gene3D" id="3.30.470.20">
    <property type="entry name" value="ATP-grasp fold, B domain"/>
    <property type="match status" value="1"/>
</dbReference>
<dbReference type="Gene3D" id="3.30.200.20">
    <property type="entry name" value="Phosphorylase Kinase, domain 1"/>
    <property type="match status" value="1"/>
</dbReference>
<dbReference type="HAMAP" id="MF_00137">
    <property type="entry name" value="SAICAR_synth"/>
    <property type="match status" value="1"/>
</dbReference>
<dbReference type="InterPro" id="IPR028923">
    <property type="entry name" value="SAICAR_synt/ADE2_N"/>
</dbReference>
<dbReference type="InterPro" id="IPR033934">
    <property type="entry name" value="SAICAR_synt_PurC"/>
</dbReference>
<dbReference type="InterPro" id="IPR001636">
    <property type="entry name" value="SAICAR_synth"/>
</dbReference>
<dbReference type="InterPro" id="IPR050089">
    <property type="entry name" value="SAICAR_synthetase"/>
</dbReference>
<dbReference type="InterPro" id="IPR018236">
    <property type="entry name" value="SAICAR_synthetase_CS"/>
</dbReference>
<dbReference type="NCBIfam" id="TIGR00081">
    <property type="entry name" value="purC"/>
    <property type="match status" value="1"/>
</dbReference>
<dbReference type="PANTHER" id="PTHR43599">
    <property type="entry name" value="MULTIFUNCTIONAL PROTEIN ADE2"/>
    <property type="match status" value="1"/>
</dbReference>
<dbReference type="PANTHER" id="PTHR43599:SF3">
    <property type="entry name" value="SI:DKEY-6E2.2"/>
    <property type="match status" value="1"/>
</dbReference>
<dbReference type="Pfam" id="PF01259">
    <property type="entry name" value="SAICAR_synt"/>
    <property type="match status" value="1"/>
</dbReference>
<dbReference type="SUPFAM" id="SSF56104">
    <property type="entry name" value="SAICAR synthase-like"/>
    <property type="match status" value="1"/>
</dbReference>
<dbReference type="PROSITE" id="PS01057">
    <property type="entry name" value="SAICAR_SYNTHETASE_1"/>
    <property type="match status" value="1"/>
</dbReference>
<keyword id="KW-0067">ATP-binding</keyword>
<keyword id="KW-0436">Ligase</keyword>
<keyword id="KW-0547">Nucleotide-binding</keyword>
<keyword id="KW-0658">Purine biosynthesis</keyword>
<gene>
    <name evidence="1" type="primary">purC</name>
    <name type="ordered locus">P9303_05481</name>
</gene>
<organism>
    <name type="scientific">Prochlorococcus marinus (strain MIT 9303)</name>
    <dbReference type="NCBI Taxonomy" id="59922"/>
    <lineage>
        <taxon>Bacteria</taxon>
        <taxon>Bacillati</taxon>
        <taxon>Cyanobacteriota</taxon>
        <taxon>Cyanophyceae</taxon>
        <taxon>Synechococcales</taxon>
        <taxon>Prochlorococcaceae</taxon>
        <taxon>Prochlorococcus</taxon>
    </lineage>
</organism>
<protein>
    <recommendedName>
        <fullName evidence="1">Phosphoribosylaminoimidazole-succinocarboxamide synthase</fullName>
        <ecNumber evidence="1">6.3.2.6</ecNumber>
    </recommendedName>
    <alternativeName>
        <fullName evidence="1">SAICAR synthetase</fullName>
    </alternativeName>
</protein>